<gene>
    <name type="primary">icsP</name>
    <name type="synonym">sopA</name>
    <name type="ordered locus">CP0271</name>
</gene>
<name>ICSP_SHIFL</name>
<organism>
    <name type="scientific">Shigella flexneri</name>
    <dbReference type="NCBI Taxonomy" id="623"/>
    <lineage>
        <taxon>Bacteria</taxon>
        <taxon>Pseudomonadati</taxon>
        <taxon>Pseudomonadota</taxon>
        <taxon>Gammaproteobacteria</taxon>
        <taxon>Enterobacterales</taxon>
        <taxon>Enterobacteriaceae</taxon>
        <taxon>Shigella</taxon>
    </lineage>
</organism>
<protein>
    <recommendedName>
        <fullName>Outer membrane protease IcsP</fullName>
        <ecNumber>3.4.23.-</ecNumber>
    </recommendedName>
</protein>
<accession>O33641</accession>
<accession>P95750</accession>
<accession>Q6XW13</accession>
<accession>Q7BEI2</accession>
<keyword id="KW-0064">Aspartyl protease</keyword>
<keyword id="KW-0998">Cell outer membrane</keyword>
<keyword id="KW-0378">Hydrolase</keyword>
<keyword id="KW-0472">Membrane</keyword>
<keyword id="KW-0614">Plasmid</keyword>
<keyword id="KW-0645">Protease</keyword>
<keyword id="KW-1185">Reference proteome</keyword>
<keyword id="KW-0732">Signal</keyword>
<keyword id="KW-0812">Transmembrane</keyword>
<keyword id="KW-1134">Transmembrane beta strand</keyword>
<keyword id="KW-0843">Virulence</keyword>
<reference key="1">
    <citation type="journal article" date="1997" name="Mol. Microbiol.">
        <title>SopA, the outer membrane protease responsible for polar localization of IcsA in Shigella flexneri.</title>
        <authorList>
            <person name="Egile C."/>
            <person name="d'Hauteville H."/>
            <person name="Parsot C."/>
            <person name="Sansonetti P.J."/>
        </authorList>
    </citation>
    <scope>NUCLEOTIDE SEQUENCE [GENOMIC DNA]</scope>
    <scope>FUNCTION</scope>
    <source>
        <strain>M90T / Serotype 5a</strain>
        <plasmid>pWR100</plasmid>
    </source>
</reference>
<reference key="2">
    <citation type="journal article" date="1997" name="Mol. Microbiol.">
        <title>Disruption of IcsP, the major Shigella protease that cleaves IcsA, accelerates actin-based motility.</title>
        <authorList>
            <person name="Shere K.D."/>
            <person name="Sallustio S."/>
            <person name="Manessis A."/>
            <person name="D'Aversa T.G."/>
            <person name="Goldberg M.B."/>
        </authorList>
    </citation>
    <scope>NUCLEOTIDE SEQUENCE [GENOMIC DNA]</scope>
    <scope>FUNCTION</scope>
    <source>
        <strain>ATCC 700930 / 2457T / Serotype 2a</strain>
        <plasmid>pWR100</plasmid>
    </source>
</reference>
<reference key="3">
    <citation type="journal article" date="2000" name="Mol. Microbiol.">
        <title>The virulence plasmid pWR100 and the repertoire of proteins secreted by the type III secretion apparatus of Shigella flexneri.</title>
        <authorList>
            <person name="Buchrieser C."/>
            <person name="Glaser P."/>
            <person name="Rusniok C."/>
            <person name="Nedjari H."/>
            <person name="d'Hauteville H."/>
            <person name="Kunst F."/>
            <person name="Sansonetti P.J."/>
            <person name="Parsot C."/>
        </authorList>
    </citation>
    <scope>NUCLEOTIDE SEQUENCE [GENOMIC DNA]</scope>
    <source>
        <strain>M90T / Serotype 5a</strain>
        <plasmid>pWR100</plasmid>
    </source>
</reference>
<reference key="4">
    <citation type="journal article" date="2001" name="Infect. Immun.">
        <title>Complete DNA sequence and analysis of the large virulence plasmid of Shigella flexneri.</title>
        <authorList>
            <person name="Venkatesan M.M."/>
            <person name="Goldberg M.B."/>
            <person name="Rose D.J."/>
            <person name="Grotbeck E.J."/>
            <person name="Burland V."/>
            <person name="Blattner F.R."/>
        </authorList>
    </citation>
    <scope>NUCLEOTIDE SEQUENCE [GENOMIC DNA]</scope>
    <source>
        <strain>M90T / Serotype 5a</strain>
        <plasmid>pWR501</plasmid>
    </source>
</reference>
<reference key="5">
    <citation type="journal article" date="2003" name="Infect. Immun.">
        <title>Comparison of two major forms of the Shigella virulence plasmid pINV: positive selection is a major force driving the divergence.</title>
        <authorList>
            <person name="Lan R."/>
            <person name="Stevenson G."/>
            <person name="Reeves P.R."/>
        </authorList>
    </citation>
    <scope>NUCLEOTIDE SEQUENCE [GENOMIC DNA]</scope>
    <source>
        <strain>M1382 / Serotype 6</strain>
        <plasmid>pINV_F6_M1382</plasmid>
    </source>
</reference>
<reference key="6">
    <citation type="journal article" date="2002" name="Nucleic Acids Res.">
        <title>Genome sequence of Shigella flexneri 2a: insights into pathogenicity through comparison with genomes of Escherichia coli K12 and O157.</title>
        <authorList>
            <person name="Jin Q."/>
            <person name="Yuan Z."/>
            <person name="Xu J."/>
            <person name="Wang Y."/>
            <person name="Shen Y."/>
            <person name="Lu W."/>
            <person name="Wang J."/>
            <person name="Liu H."/>
            <person name="Yang J."/>
            <person name="Yang F."/>
            <person name="Zhang X."/>
            <person name="Zhang J."/>
            <person name="Yang G."/>
            <person name="Wu H."/>
            <person name="Qu D."/>
            <person name="Dong J."/>
            <person name="Sun L."/>
            <person name="Xue Y."/>
            <person name="Zhao A."/>
            <person name="Gao Y."/>
            <person name="Zhu J."/>
            <person name="Kan B."/>
            <person name="Ding K."/>
            <person name="Chen S."/>
            <person name="Cheng H."/>
            <person name="Yao Z."/>
            <person name="He B."/>
            <person name="Chen R."/>
            <person name="Ma D."/>
            <person name="Qiang B."/>
            <person name="Wen Y."/>
            <person name="Hou Y."/>
            <person name="Yu J."/>
        </authorList>
    </citation>
    <scope>NUCLEOTIDE SEQUENCE [LARGE SCALE GENOMIC DNA]</scope>
    <source>
        <strain>301 / Serotype 2a</strain>
        <plasmid>pCP301</plasmid>
    </source>
</reference>
<reference key="7">
    <citation type="journal article" date="1999" name="Mol. Microbiol.">
        <title>The unipolar Shigella surface protein IcsA is targeted directly to the bacterial old pole: IcsP cleavage of IcsA occurs over the entire bacterial surface.</title>
        <authorList>
            <person name="Steinhauer J."/>
            <person name="Agha R."/>
            <person name="Pham T."/>
            <person name="Varga A.W."/>
            <person name="Goldberg M.B."/>
        </authorList>
    </citation>
    <scope>FUNCTION</scope>
    <scope>SUBCELLULAR LOCATION</scope>
    <source>
        <strain>ATCC 700930 / 2457T / Serotype 2a</strain>
        <strain>M90T / Serotype 5a</strain>
        <plasmid>pWR100</plasmid>
    </source>
</reference>
<reference key="8">
    <citation type="journal article" date="2004" name="J. Bacteriol.">
        <title>Regulation of IcsP, the outer membrane protease of the Shigella actin tail assembly protein IcsA, by virulence plasmid regulators VirF and VirB.</title>
        <authorList>
            <person name="Wing H.J."/>
            <person name="Yan A.W."/>
            <person name="Goldman S.R."/>
            <person name="Goldberg M.B."/>
        </authorList>
    </citation>
    <scope>REGULATION BY VIRB</scope>
    <source>
        <strain>ATCC 700930 / 2457T / Serotype 2a</strain>
        <plasmid>pWR100</plasmid>
    </source>
</reference>
<evidence type="ECO:0000250" key="1"/>
<evidence type="ECO:0000255" key="2"/>
<evidence type="ECO:0000269" key="3">
    <source>
    </source>
</evidence>
<evidence type="ECO:0000269" key="4">
    <source>
    </source>
</evidence>
<evidence type="ECO:0000269" key="5">
    <source>
    </source>
</evidence>
<evidence type="ECO:0000305" key="6"/>
<proteinExistence type="evidence at transcript level"/>
<feature type="signal peptide" evidence="2">
    <location>
        <begin position="1"/>
        <end position="20"/>
    </location>
</feature>
<feature type="chain" id="PRO_0000025820" description="Outer membrane protease IcsP">
    <location>
        <begin position="21"/>
        <end position="315"/>
    </location>
</feature>
<feature type="active site" evidence="1">
    <location>
        <position position="103"/>
    </location>
</feature>
<feature type="active site" evidence="1">
    <location>
        <position position="105"/>
    </location>
</feature>
<feature type="active site" evidence="1">
    <location>
        <position position="230"/>
    </location>
</feature>
<feature type="active site" evidence="1">
    <location>
        <position position="232"/>
    </location>
</feature>
<feature type="sequence variant" description="In plasmid pINV_F6_M1382.">
    <original>F</original>
    <variation>L</variation>
    <location>
        <position position="6"/>
    </location>
</feature>
<feature type="sequence variant" description="In plasmid pINV_F6_M1382.">
    <original>S</original>
    <variation>N</variation>
    <location>
        <position position="176"/>
    </location>
</feature>
<feature type="sequence variant" description="In plasmid pINV_F6_M1382.">
    <original>A</original>
    <variation>T</variation>
    <location>
        <position position="182"/>
    </location>
</feature>
<feature type="sequence variant" description="In plasmid pINV_F6_M1382.">
    <original>L</original>
    <variation>R</variation>
    <location>
        <position position="225"/>
    </location>
</feature>
<comment type="function">
    <text evidence="3 4 5">Protease responsible for the cleavage of IcsA between 'Arg-758' and 'Arg-759', removing the entire alpha domain from IscA localized on the bacterial surface. This proteolytic activity contributes to the maintenance of a tight polar cap of IcsA, which is important to Shigella actin-based motility.</text>
</comment>
<comment type="subcellular location">
    <subcellularLocation>
        <location evidence="3">Cell outer membrane</location>
        <topology evidence="3">Multi-pass membrane protein</topology>
    </subcellularLocation>
</comment>
<comment type="induction">
    <text>Transcriptionally regulated by VirB (InvE).</text>
</comment>
<comment type="similarity">
    <text evidence="6">Belongs to the peptidase A26 family.</text>
</comment>
<comment type="sequence caution" evidence="6">
    <conflict type="erroneous initiation">
        <sequence resource="EMBL-CDS" id="AAB61737"/>
    </conflict>
    <text>Extended N-terminus.</text>
</comment>
<comment type="sequence caution" evidence="6">
    <conflict type="erroneous initiation">
        <sequence resource="EMBL-CDS" id="AAK18603"/>
    </conflict>
    <text>Extended N-terminus.</text>
</comment>
<sequence>MKLKFFVLALCVPAIFTTHATTNYPLFIPDNISTDISLGSLSGKTKERVYHPKEGGRKISQLDWKYSNATIVRGGIDWKLIPKVSFGVSGWTTLGNQKASMVDKDWNNSNTPQVWTDQSWHPNTHLRDANEFELNLKGWLLNNLDYRLGLIAGYQESRYSFNAMGGSYIYSENGGSRNKKGAHPSGERTIGYKQLFKIPYIGLTANYRHENFEFGAELKYSGWVLSSDTDKHYQTETIFKDEIKNQNYCSVAANIGYYVTPSAKFYIEGSRNYISNKKGDTSLYEQSTNISGTIKNSASIEYIGFLTSAGIKYIF</sequence>
<dbReference type="EC" id="3.4.23.-"/>
<dbReference type="EMBL" id="U73461">
    <property type="protein sequence ID" value="AAC45084.1"/>
    <property type="molecule type" value="Genomic_DNA"/>
</dbReference>
<dbReference type="EMBL" id="AF001633">
    <property type="protein sequence ID" value="AAB61737.1"/>
    <property type="status" value="ALT_INIT"/>
    <property type="molecule type" value="Genomic_DNA"/>
</dbReference>
<dbReference type="EMBL" id="AL391753">
    <property type="protein sequence ID" value="CAC05769.2"/>
    <property type="molecule type" value="Genomic_DNA"/>
</dbReference>
<dbReference type="EMBL" id="AF348706">
    <property type="protein sequence ID" value="AAK18603.1"/>
    <property type="status" value="ALT_INIT"/>
    <property type="molecule type" value="Genomic_DNA"/>
</dbReference>
<dbReference type="EMBL" id="AY206427">
    <property type="protein sequence ID" value="AAP78966.1"/>
    <property type="molecule type" value="Genomic_DNA"/>
</dbReference>
<dbReference type="EMBL" id="AF386526">
    <property type="protein sequence ID" value="AAL72459.2"/>
    <property type="molecule type" value="Genomic_DNA"/>
</dbReference>
<dbReference type="RefSeq" id="WP_005061047.1">
    <property type="nucleotide sequence ID" value="NZ_WPGT01000123.1"/>
</dbReference>
<dbReference type="RefSeq" id="YP_009062451.1">
    <property type="nucleotide sequence ID" value="NC_024996.1"/>
</dbReference>
<dbReference type="SMR" id="O33641"/>
<dbReference type="MEROPS" id="A26.005"/>
<dbReference type="PaxDb" id="198214-CP0271"/>
<dbReference type="KEGG" id="sfl:CP0271"/>
<dbReference type="PATRIC" id="fig|198214.7.peg.5532"/>
<dbReference type="HOGENOM" id="CLU_063041_1_0_6"/>
<dbReference type="PHI-base" id="PHI:6577"/>
<dbReference type="Proteomes" id="UP000001006">
    <property type="component" value="Plasmid pCP301"/>
</dbReference>
<dbReference type="GO" id="GO:0009279">
    <property type="term" value="C:cell outer membrane"/>
    <property type="evidence" value="ECO:0007669"/>
    <property type="project" value="UniProtKB-SubCell"/>
</dbReference>
<dbReference type="GO" id="GO:0004190">
    <property type="term" value="F:aspartic-type endopeptidase activity"/>
    <property type="evidence" value="ECO:0007669"/>
    <property type="project" value="UniProtKB-KW"/>
</dbReference>
<dbReference type="GO" id="GO:0006508">
    <property type="term" value="P:proteolysis"/>
    <property type="evidence" value="ECO:0007669"/>
    <property type="project" value="UniProtKB-KW"/>
</dbReference>
<dbReference type="Gene3D" id="2.40.128.90">
    <property type="entry name" value="OMPT-like"/>
    <property type="match status" value="1"/>
</dbReference>
<dbReference type="InterPro" id="IPR020080">
    <property type="entry name" value="OM_adhesin/peptidase_omptin"/>
</dbReference>
<dbReference type="InterPro" id="IPR053724">
    <property type="entry name" value="OMP_A26_sf"/>
</dbReference>
<dbReference type="InterPro" id="IPR020079">
    <property type="entry name" value="Peptidase_A26_CS"/>
</dbReference>
<dbReference type="InterPro" id="IPR000036">
    <property type="entry name" value="Peptidase_A26_omptin"/>
</dbReference>
<dbReference type="NCBIfam" id="NF008224">
    <property type="entry name" value="PRK10993.1-4"/>
    <property type="match status" value="1"/>
</dbReference>
<dbReference type="Pfam" id="PF01278">
    <property type="entry name" value="Omptin"/>
    <property type="match status" value="1"/>
</dbReference>
<dbReference type="PIRSF" id="PIRSF001522">
    <property type="entry name" value="Peptidase_A26"/>
    <property type="match status" value="1"/>
</dbReference>
<dbReference type="PRINTS" id="PR00482">
    <property type="entry name" value="OMPTIN"/>
</dbReference>
<dbReference type="SUPFAM" id="SSF69917">
    <property type="entry name" value="OMPT-like"/>
    <property type="match status" value="1"/>
</dbReference>
<dbReference type="PROSITE" id="PS00834">
    <property type="entry name" value="OMPTIN_1"/>
    <property type="match status" value="1"/>
</dbReference>
<dbReference type="PROSITE" id="PS00835">
    <property type="entry name" value="OMPTIN_2"/>
    <property type="match status" value="1"/>
</dbReference>
<geneLocation type="plasmid">
    <name>pWR100</name>
</geneLocation>
<geneLocation type="plasmid">
    <name>pWR501</name>
</geneLocation>
<geneLocation type="plasmid">
    <name>pCP301</name>
</geneLocation>
<geneLocation type="plasmid">
    <name>pINV_F6_M1382</name>
</geneLocation>